<gene>
    <name evidence="1" type="primary">nhaA</name>
    <name type="ordered locus">GFO_1203</name>
</gene>
<keyword id="KW-0050">Antiport</keyword>
<keyword id="KW-0997">Cell inner membrane</keyword>
<keyword id="KW-1003">Cell membrane</keyword>
<keyword id="KW-0406">Ion transport</keyword>
<keyword id="KW-0472">Membrane</keyword>
<keyword id="KW-0915">Sodium</keyword>
<keyword id="KW-0739">Sodium transport</keyword>
<keyword id="KW-0812">Transmembrane</keyword>
<keyword id="KW-1133">Transmembrane helix</keyword>
<keyword id="KW-0813">Transport</keyword>
<sequence>MGQSVRNQSTIGYIRETATKFLDRETAGGIFLIIATIVALLLANSQWAGAYHHFLGDELLFEFSEHLSFGLTIEEWINDGLMAIFFLVAGLELKREVMVGELSSIKKASAPLLAALGGMAVPALIFISLNLGTENIKGWGIPMATDIAYSLGIIGLLGKNVPRQLKTFLIALAIADDIGAILVIALFYSNELSWIYLGSGMGAFGLLLLMNWTGVKNLIWYIIIGIILWYCFLNSGIHPTIAGVLFAITIPIVPKLDSKILKERTATNVTNLEKTELEKLNPLQDKKQQIILKAIKTDTENSRPPLLKLENSLVDFNAFFIIPIFAVANAGVKLDVNLIEVVSGSLGLGILLGLAIGKVTGIGIFTLIGQKLGVSELHITLNWKHIIGIGMIAGIGFTMSLFITNLAFNDQELIKISKISILIASLLAAIGGAVILLLTSNKGRKNIVK</sequence>
<name>NHAA_CHRFK</name>
<accession>A0M0N2</accession>
<feature type="chain" id="PRO_0000334310" description="Na(+)/H(+) antiporter NhaA">
    <location>
        <begin position="1"/>
        <end position="449"/>
    </location>
</feature>
<feature type="transmembrane region" description="Helical" evidence="1">
    <location>
        <begin position="30"/>
        <end position="50"/>
    </location>
</feature>
<feature type="transmembrane region" description="Helical" evidence="1">
    <location>
        <begin position="69"/>
        <end position="89"/>
    </location>
</feature>
<feature type="transmembrane region" description="Helical" evidence="1">
    <location>
        <begin position="112"/>
        <end position="132"/>
    </location>
</feature>
<feature type="transmembrane region" description="Helical" evidence="1">
    <location>
        <begin position="138"/>
        <end position="158"/>
    </location>
</feature>
<feature type="transmembrane region" description="Helical" evidence="1">
    <location>
        <begin position="168"/>
        <end position="188"/>
    </location>
</feature>
<feature type="transmembrane region" description="Helical" evidence="1">
    <location>
        <begin position="192"/>
        <end position="212"/>
    </location>
</feature>
<feature type="transmembrane region" description="Helical" evidence="1">
    <location>
        <begin position="218"/>
        <end position="238"/>
    </location>
</feature>
<feature type="transmembrane region" description="Helical" evidence="1">
    <location>
        <begin position="241"/>
        <end position="261"/>
    </location>
</feature>
<feature type="transmembrane region" description="Helical" evidence="1">
    <location>
        <begin position="312"/>
        <end position="332"/>
    </location>
</feature>
<feature type="transmembrane region" description="Helical" evidence="1">
    <location>
        <begin position="348"/>
        <end position="368"/>
    </location>
</feature>
<feature type="transmembrane region" description="Helical" evidence="1">
    <location>
        <begin position="386"/>
        <end position="406"/>
    </location>
</feature>
<feature type="transmembrane region" description="Helical" evidence="1">
    <location>
        <begin position="419"/>
        <end position="439"/>
    </location>
</feature>
<evidence type="ECO:0000255" key="1">
    <source>
        <dbReference type="HAMAP-Rule" id="MF_01844"/>
    </source>
</evidence>
<protein>
    <recommendedName>
        <fullName evidence="1">Na(+)/H(+) antiporter NhaA</fullName>
    </recommendedName>
    <alternativeName>
        <fullName evidence="1">Sodium/proton antiporter NhaA</fullName>
    </alternativeName>
</protein>
<reference key="1">
    <citation type="journal article" date="2006" name="Environ. Microbiol.">
        <title>Whole genome analysis of the marine Bacteroidetes'Gramella forsetii' reveals adaptations to degradation of polymeric organic matter.</title>
        <authorList>
            <person name="Bauer M."/>
            <person name="Kube M."/>
            <person name="Teeling H."/>
            <person name="Richter M."/>
            <person name="Lombardot T."/>
            <person name="Allers E."/>
            <person name="Wuerdemann C.A."/>
            <person name="Quast C."/>
            <person name="Kuhl H."/>
            <person name="Knaust F."/>
            <person name="Woebken D."/>
            <person name="Bischof K."/>
            <person name="Mussmann M."/>
            <person name="Choudhuri J.V."/>
            <person name="Meyer F."/>
            <person name="Reinhardt R."/>
            <person name="Amann R.I."/>
            <person name="Gloeckner F.O."/>
        </authorList>
    </citation>
    <scope>NUCLEOTIDE SEQUENCE [LARGE SCALE GENOMIC DNA]</scope>
    <source>
        <strain>DSM 17595 / CGMCC 1.15422 / KT0803</strain>
    </source>
</reference>
<dbReference type="EMBL" id="CU207366">
    <property type="protein sequence ID" value="CAL66177.1"/>
    <property type="molecule type" value="Genomic_DNA"/>
</dbReference>
<dbReference type="RefSeq" id="WP_011709094.1">
    <property type="nucleotide sequence ID" value="NC_008571.1"/>
</dbReference>
<dbReference type="SMR" id="A0M0N2"/>
<dbReference type="STRING" id="411154.GFO_1203"/>
<dbReference type="KEGG" id="gfo:GFO_1203"/>
<dbReference type="eggNOG" id="COG3004">
    <property type="taxonomic scope" value="Bacteria"/>
</dbReference>
<dbReference type="HOGENOM" id="CLU_015803_1_2_10"/>
<dbReference type="OrthoDB" id="9808135at2"/>
<dbReference type="Proteomes" id="UP000000755">
    <property type="component" value="Chromosome"/>
</dbReference>
<dbReference type="GO" id="GO:0005886">
    <property type="term" value="C:plasma membrane"/>
    <property type="evidence" value="ECO:0007669"/>
    <property type="project" value="UniProtKB-SubCell"/>
</dbReference>
<dbReference type="GO" id="GO:0015385">
    <property type="term" value="F:sodium:proton antiporter activity"/>
    <property type="evidence" value="ECO:0007669"/>
    <property type="project" value="TreeGrafter"/>
</dbReference>
<dbReference type="GO" id="GO:0006885">
    <property type="term" value="P:regulation of pH"/>
    <property type="evidence" value="ECO:0007669"/>
    <property type="project" value="InterPro"/>
</dbReference>
<dbReference type="Gene3D" id="1.20.1530.10">
    <property type="entry name" value="Na+/H+ antiporter like domain"/>
    <property type="match status" value="1"/>
</dbReference>
<dbReference type="HAMAP" id="MF_01844">
    <property type="entry name" value="NhaA"/>
    <property type="match status" value="1"/>
</dbReference>
<dbReference type="InterPro" id="IPR023171">
    <property type="entry name" value="Na/H_antiporter_dom_sf"/>
</dbReference>
<dbReference type="InterPro" id="IPR004670">
    <property type="entry name" value="NhaA"/>
</dbReference>
<dbReference type="NCBIfam" id="TIGR00773">
    <property type="entry name" value="NhaA"/>
    <property type="match status" value="1"/>
</dbReference>
<dbReference type="PANTHER" id="PTHR30341:SF0">
    <property type="entry name" value="NA(+)_H(+) ANTIPORTER NHAA"/>
    <property type="match status" value="1"/>
</dbReference>
<dbReference type="PANTHER" id="PTHR30341">
    <property type="entry name" value="SODIUM ION/PROTON ANTIPORTER NHAA-RELATED"/>
    <property type="match status" value="1"/>
</dbReference>
<dbReference type="Pfam" id="PF06965">
    <property type="entry name" value="Na_H_antiport_1"/>
    <property type="match status" value="1"/>
</dbReference>
<proteinExistence type="inferred from homology"/>
<organism>
    <name type="scientific">Christiangramia forsetii (strain DSM 17595 / CGMCC 1.15422 / KT0803)</name>
    <name type="common">Gramella forsetii</name>
    <dbReference type="NCBI Taxonomy" id="411154"/>
    <lineage>
        <taxon>Bacteria</taxon>
        <taxon>Pseudomonadati</taxon>
        <taxon>Bacteroidota</taxon>
        <taxon>Flavobacteriia</taxon>
        <taxon>Flavobacteriales</taxon>
        <taxon>Flavobacteriaceae</taxon>
        <taxon>Christiangramia</taxon>
    </lineage>
</organism>
<comment type="function">
    <text evidence="1">Na(+)/H(+) antiporter that extrudes sodium in exchange for external protons.</text>
</comment>
<comment type="catalytic activity">
    <reaction evidence="1">
        <text>Na(+)(in) + 2 H(+)(out) = Na(+)(out) + 2 H(+)(in)</text>
        <dbReference type="Rhea" id="RHEA:29251"/>
        <dbReference type="ChEBI" id="CHEBI:15378"/>
        <dbReference type="ChEBI" id="CHEBI:29101"/>
    </reaction>
    <physiologicalReaction direction="left-to-right" evidence="1">
        <dbReference type="Rhea" id="RHEA:29252"/>
    </physiologicalReaction>
</comment>
<comment type="subcellular location">
    <subcellularLocation>
        <location evidence="1">Cell inner membrane</location>
        <topology evidence="1">Multi-pass membrane protein</topology>
    </subcellularLocation>
</comment>
<comment type="similarity">
    <text evidence="1">Belongs to the NhaA Na(+)/H(+) (TC 2.A.33) antiporter family.</text>
</comment>